<accession>P53015</accession>
<name>YPO4_CAEEL</name>
<organism>
    <name type="scientific">Caenorhabditis elegans</name>
    <dbReference type="NCBI Taxonomy" id="6239"/>
    <lineage>
        <taxon>Eukaryota</taxon>
        <taxon>Metazoa</taxon>
        <taxon>Ecdysozoa</taxon>
        <taxon>Nematoda</taxon>
        <taxon>Chromadorea</taxon>
        <taxon>Rhabditida</taxon>
        <taxon>Rhabditina</taxon>
        <taxon>Rhabditomorpha</taxon>
        <taxon>Rhabditoidea</taxon>
        <taxon>Rhabditidae</taxon>
        <taxon>Peloderinae</taxon>
        <taxon>Caenorhabditis</taxon>
    </lineage>
</organism>
<gene>
    <name evidence="2" type="primary">panl-2</name>
    <name type="ORF">F31E3.4</name>
</gene>
<dbReference type="EMBL" id="FO080392">
    <property type="protein sequence ID" value="CCD63406.1"/>
    <property type="molecule type" value="Genomic_DNA"/>
</dbReference>
<dbReference type="PIR" id="T16217">
    <property type="entry name" value="T16217"/>
</dbReference>
<dbReference type="BioGRID" id="41188">
    <property type="interactions" value="2"/>
</dbReference>
<dbReference type="ComplexPortal" id="CPX-653">
    <property type="entry name" value="PAN2-PAN3 mRNA deadenylation complex"/>
</dbReference>
<dbReference type="FunCoup" id="P53015">
    <property type="interactions" value="2805"/>
</dbReference>
<dbReference type="STRING" id="6239.F31E3.4.1"/>
<dbReference type="iPTMnet" id="P53015"/>
<dbReference type="PaxDb" id="6239-F31E3.4"/>
<dbReference type="PeptideAtlas" id="P53015"/>
<dbReference type="EnsemblMetazoa" id="F31E3.4.1">
    <property type="protein sequence ID" value="F31E3.4.1"/>
    <property type="gene ID" value="WBGene00017951"/>
</dbReference>
<dbReference type="KEGG" id="cel:CELE_F31E3.4"/>
<dbReference type="UCSC" id="F31E3.4">
    <property type="organism name" value="c. elegans"/>
</dbReference>
<dbReference type="AGR" id="WB:WBGene00017951"/>
<dbReference type="CTD" id="175974"/>
<dbReference type="WormBase" id="F31E3.4">
    <property type="protein sequence ID" value="CE01269"/>
    <property type="gene ID" value="WBGene00017951"/>
    <property type="gene designation" value="panl-2"/>
</dbReference>
<dbReference type="eggNOG" id="KOG1275">
    <property type="taxonomic scope" value="Eukaryota"/>
</dbReference>
<dbReference type="GeneTree" id="ENSGT00390000013978"/>
<dbReference type="HOGENOM" id="CLU_002369_0_0_1"/>
<dbReference type="InParanoid" id="P53015"/>
<dbReference type="OMA" id="TQELLWT"/>
<dbReference type="OrthoDB" id="16516at2759"/>
<dbReference type="PhylomeDB" id="P53015"/>
<dbReference type="PRO" id="PR:P53015"/>
<dbReference type="Proteomes" id="UP000001940">
    <property type="component" value="Chromosome III"/>
</dbReference>
<dbReference type="Bgee" id="WBGene00017951">
    <property type="expression patterns" value="Expressed in germ line (C elegans) and 4 other cell types or tissues"/>
</dbReference>
<dbReference type="GO" id="GO:0000932">
    <property type="term" value="C:P-body"/>
    <property type="evidence" value="ECO:0000318"/>
    <property type="project" value="GO_Central"/>
</dbReference>
<dbReference type="GO" id="GO:0031251">
    <property type="term" value="C:PAN complex"/>
    <property type="evidence" value="ECO:0000318"/>
    <property type="project" value="GO_Central"/>
</dbReference>
<dbReference type="GO" id="GO:0003676">
    <property type="term" value="F:nucleic acid binding"/>
    <property type="evidence" value="ECO:0007669"/>
    <property type="project" value="InterPro"/>
</dbReference>
<dbReference type="GO" id="GO:0000289">
    <property type="term" value="P:nuclear-transcribed mRNA poly(A) tail shortening"/>
    <property type="evidence" value="ECO:0000318"/>
    <property type="project" value="GO_Central"/>
</dbReference>
<dbReference type="GO" id="GO:0022414">
    <property type="term" value="P:reproductive process"/>
    <property type="evidence" value="ECO:0000315"/>
    <property type="project" value="WormBase"/>
</dbReference>
<dbReference type="CDD" id="cd06143">
    <property type="entry name" value="PAN2_exo"/>
    <property type="match status" value="1"/>
</dbReference>
<dbReference type="FunFam" id="2.130.10.10:FF:000421">
    <property type="entry name" value="PAN2-PAN3 deadenylation complex catalytic subunit PAN2"/>
    <property type="match status" value="1"/>
</dbReference>
<dbReference type="FunFam" id="3.90.70.10:FF:000320">
    <property type="entry name" value="Uncharacterized protein F31E3.4"/>
    <property type="match status" value="1"/>
</dbReference>
<dbReference type="Gene3D" id="3.90.70.10">
    <property type="entry name" value="Cysteine proteinases"/>
    <property type="match status" value="1"/>
</dbReference>
<dbReference type="Gene3D" id="3.30.420.10">
    <property type="entry name" value="Ribonuclease H-like superfamily/Ribonuclease H"/>
    <property type="match status" value="1"/>
</dbReference>
<dbReference type="Gene3D" id="2.130.10.10">
    <property type="entry name" value="YVTN repeat-like/Quinoprotein amine dehydrogenase"/>
    <property type="match status" value="1"/>
</dbReference>
<dbReference type="InterPro" id="IPR013520">
    <property type="entry name" value="Exonuclease_RNaseT/DNA_pol3"/>
</dbReference>
<dbReference type="InterPro" id="IPR050785">
    <property type="entry name" value="PAN2-PAN3_catalytic_subunit"/>
</dbReference>
<dbReference type="InterPro" id="IPR048841">
    <property type="entry name" value="PAN2_N"/>
</dbReference>
<dbReference type="InterPro" id="IPR028881">
    <property type="entry name" value="PAN2_UCH_dom"/>
</dbReference>
<dbReference type="InterPro" id="IPR012337">
    <property type="entry name" value="RNaseH-like_sf"/>
</dbReference>
<dbReference type="InterPro" id="IPR036397">
    <property type="entry name" value="RNaseH_sf"/>
</dbReference>
<dbReference type="InterPro" id="IPR028889">
    <property type="entry name" value="USP_dom"/>
</dbReference>
<dbReference type="InterPro" id="IPR015943">
    <property type="entry name" value="WD40/YVTN_repeat-like_dom_sf"/>
</dbReference>
<dbReference type="InterPro" id="IPR036322">
    <property type="entry name" value="WD40_repeat_dom_sf"/>
</dbReference>
<dbReference type="PANTHER" id="PTHR15728">
    <property type="entry name" value="DEADENYLATION COMPLEX CATALYTIC SUBUNIT PAN2"/>
    <property type="match status" value="1"/>
</dbReference>
<dbReference type="PANTHER" id="PTHR15728:SF0">
    <property type="entry name" value="PAN2-PAN3 DEADENYLATION COMPLEX CATALYTIC SUBUNIT PAN2"/>
    <property type="match status" value="1"/>
</dbReference>
<dbReference type="Pfam" id="PF20770">
    <property type="entry name" value="PAN2_N"/>
    <property type="match status" value="1"/>
</dbReference>
<dbReference type="Pfam" id="PF00929">
    <property type="entry name" value="RNase_T"/>
    <property type="match status" value="1"/>
</dbReference>
<dbReference type="Pfam" id="PF13423">
    <property type="entry name" value="UCH_1"/>
    <property type="match status" value="1"/>
</dbReference>
<dbReference type="SMART" id="SM00479">
    <property type="entry name" value="EXOIII"/>
    <property type="match status" value="1"/>
</dbReference>
<dbReference type="SUPFAM" id="SSF53098">
    <property type="entry name" value="Ribonuclease H-like"/>
    <property type="match status" value="1"/>
</dbReference>
<dbReference type="SUPFAM" id="SSF50978">
    <property type="entry name" value="WD40 repeat-like"/>
    <property type="match status" value="1"/>
</dbReference>
<dbReference type="PROSITE" id="PS50235">
    <property type="entry name" value="USP_3"/>
    <property type="match status" value="1"/>
</dbReference>
<feature type="chain" id="PRO_0000065319" description="PolyA-specific ribonuclease subunit panl-2">
    <location>
        <begin position="1"/>
        <end position="1131"/>
    </location>
</feature>
<feature type="domain" description="USP">
    <location>
        <begin position="489"/>
        <end position="864"/>
    </location>
</feature>
<feature type="domain" description="Exonuclease">
    <location>
        <begin position="909"/>
        <end position="1074"/>
    </location>
</feature>
<feature type="region of interest" description="Disordered" evidence="1">
    <location>
        <begin position="1104"/>
        <end position="1131"/>
    </location>
</feature>
<feature type="compositionally biased region" description="Polar residues" evidence="1">
    <location>
        <begin position="1104"/>
        <end position="1115"/>
    </location>
</feature>
<sequence>MASATTNQGNEWRFVAPININTTTENTVSCVKFDPHEDLFWIGSSTGKVTSLLPTNHFTRYSAFVVSNISGVHSLEPTESLIFTLSDTMLRATTRQGIPVAKFTSPSMTKMAASCHMPGTSTFIMGGFQEKLIHYDFVKEKEIRTTELKASENAIIIRYNGTNTFTADTRGNVFVKNSKNCETIHTLDCHQDQVLDFDVQGNKLITCGVSMNRLKNMDQFIKVYDLRMYKALSPIGMPYLPQFARFMPSYCERVCVTYQTMYNQPGQTATWSNHPAGVKMFDLNSNGNSAEFPIETSLISAFDFSSNKNFIAVGNHCGIVNVFADRDQPQVNENSKETVFAAPPVQPPLSFAIDDTTQTFGSIPLGFSQEPLVSDWPTELTQIVYRRRKPPTEQTNVKSIHYLSQIKNPRINSKLKRHNIVPYFFEQEELIEASNDHGSKEEAPQEMKRIKVSKLYKKRPLIVNQVPARRGNSQDETQETYTWNIIRHVTMQSTHGMNLVANTLVQVAYSLSPIRSIVLRHICTEDSCITCELHFLFTAFSSKIGDNSGMLTNNLAWALARNGVSLKAGGVLSATQQIIKTVIDDVARTDASGSICSKFDRHLRCIRCRGLQQQESVTDHLLKLNYAPVYQASLCQLIEKSLHIGDDSGEIECEDCKQMSRMECKRKVRELSPVLLIDTNASSNGFVEFWRRQLSLFERKPGGNRSSALGTVPESPSEKKNCRFGTDCRNKKTCKFVHGLVDWPAEQTKLLEDVDLPEWAHYIPSRIAAQLCEGIVRLSDVSDLPDYDEPSAVIYELDAMIHAVGNGENDVNWTHPVTLLRESPVISSSWTLINEQLVSRLHDHEARHIDGRWKLPALLAYKKKNFDVKTSEDIISNDLFLAEENLASNGMTSLAVQSLEELPKEKELVGLDAEFIKIKTDLLEFDGKTVQMRAVGRASCVDSTGERIIFDDHVKLTDDVEVVDYLTKFSGIVKADLCPTTSEKYLTTHKRLLLRMHVLIQRGVTFVGHALHNDFTVLNVHVAESQIIDTVTLMRLGTQRMLSLQFLVKEILGETIQMEAHDSVVDARYALKLYRKYLEIKEQGLLGSEMRRIYTILPCPSPNQTSSPLVVSTTRKTPEDTNPADAAPKSV</sequence>
<proteinExistence type="predicted"/>
<keyword id="KW-1185">Reference proteome</keyword>
<reference key="1">
    <citation type="journal article" date="1998" name="Science">
        <title>Genome sequence of the nematode C. elegans: a platform for investigating biology.</title>
        <authorList>
            <consortium name="The C. elegans sequencing consortium"/>
        </authorList>
    </citation>
    <scope>NUCLEOTIDE SEQUENCE [LARGE SCALE GENOMIC DNA]</scope>
    <source>
        <strain>Bristol N2</strain>
    </source>
</reference>
<evidence type="ECO:0000256" key="1">
    <source>
        <dbReference type="SAM" id="MobiDB-lite"/>
    </source>
</evidence>
<evidence type="ECO:0000312" key="2">
    <source>
        <dbReference type="WormBase" id="F31E3.4"/>
    </source>
</evidence>
<protein>
    <recommendedName>
        <fullName evidence="2">PolyA-specific ribonuclease subunit panl-2</fullName>
    </recommendedName>
</protein>